<name>FLAW_AZOCH</name>
<organism>
    <name type="scientific">Azotobacter chroococcum mcd 1</name>
    <dbReference type="NCBI Taxonomy" id="355"/>
    <lineage>
        <taxon>Bacteria</taxon>
        <taxon>Pseudomonadati</taxon>
        <taxon>Pseudomonadota</taxon>
        <taxon>Gammaproteobacteria</taxon>
        <taxon>Pseudomonadales</taxon>
        <taxon>Pseudomonadaceae</taxon>
        <taxon>Azotobacter</taxon>
    </lineage>
</organism>
<proteinExistence type="evidence at protein level"/>
<comment type="function">
    <text>Low-potential electron donor to a number of redox enzymes.</text>
</comment>
<comment type="cofactor">
    <cofactor>
        <name>FMN</name>
        <dbReference type="ChEBI" id="CHEBI:58210"/>
    </cofactor>
</comment>
<comment type="similarity">
    <text evidence="2">Belongs to the flavodoxin family.</text>
</comment>
<dbReference type="PIR" id="S16929">
    <property type="entry name" value="S16929"/>
</dbReference>
<accession>P23002</accession>
<feature type="chain" id="PRO_0000171604" description="Flavodoxin A">
    <location>
        <begin position="1"/>
        <end position="17" status="greater than"/>
    </location>
</feature>
<feature type="domain" description="Flavodoxin-like" evidence="1">
    <location>
        <begin position="3"/>
        <end position="17" status="greater than"/>
    </location>
</feature>
<feature type="non-terminal residue">
    <location>
        <position position="17"/>
    </location>
</feature>
<reference key="1">
    <citation type="journal article" date="1991" name="Biochem. J.">
        <title>Direct electrochemistry of two genetically distinct flavodoxins isolated from Azotobacter chroococcum grown under nitrogen-fixing conditions.</title>
        <authorList>
            <person name="Bagby S."/>
            <person name="Barker P.D."/>
            <person name="Hill H.A.O."/>
            <person name="Sanghera G.S."/>
            <person name="Dunbar B."/>
            <person name="Ashby G.A."/>
            <person name="Eady R.R."/>
            <person name="Thorneley R.N.F."/>
        </authorList>
    </citation>
    <scope>PROTEIN SEQUENCE</scope>
    <source>
        <strain>MCD 1155</strain>
    </source>
</reference>
<sequence length="17" mass="1694">XXIGIFYGSSSGVTGKV</sequence>
<protein>
    <recommendedName>
        <fullName>Flavodoxin A</fullName>
        <shortName>FldA</shortName>
    </recommendedName>
</protein>
<keyword id="KW-0903">Direct protein sequencing</keyword>
<keyword id="KW-0249">Electron transport</keyword>
<keyword id="KW-0285">Flavoprotein</keyword>
<keyword id="KW-0288">FMN</keyword>
<keyword id="KW-0813">Transport</keyword>
<evidence type="ECO:0000255" key="1">
    <source>
        <dbReference type="PROSITE-ProRule" id="PRU00088"/>
    </source>
</evidence>
<evidence type="ECO:0000305" key="2"/>